<organism>
    <name type="scientific">Alcelaphine herpesvirus 1 (strain WC11)</name>
    <name type="common">AlHV-1</name>
    <name type="synonym">Malignant catarrhal fever virus</name>
    <dbReference type="NCBI Taxonomy" id="33705"/>
    <lineage>
        <taxon>Viruses</taxon>
        <taxon>Duplodnaviria</taxon>
        <taxon>Heunggongvirae</taxon>
        <taxon>Peploviricota</taxon>
        <taxon>Herviviricetes</taxon>
        <taxon>Herpesvirales</taxon>
        <taxon>Orthoherpesviridae</taxon>
        <taxon>Gammaherpesvirinae</taxon>
        <taxon>Macavirus</taxon>
        <taxon>Macavirus alcelaphinegamma1</taxon>
    </lineage>
</organism>
<accession>P33802</accession>
<name>KITH_AHV1W</name>
<proteinExistence type="inferred from homology"/>
<protein>
    <recommendedName>
        <fullName evidence="1">Thymidine kinase</fullName>
        <ecNumber evidence="1">2.7.1.21</ecNumber>
    </recommendedName>
</protein>
<feature type="chain" id="PRO_0000175060" description="Thymidine kinase">
    <location>
        <begin position="1"/>
        <end position="686"/>
    </location>
</feature>
<feature type="region of interest" description="Disordered" evidence="2">
    <location>
        <begin position="1"/>
        <end position="21"/>
    </location>
</feature>
<feature type="region of interest" description="Disordered" evidence="2">
    <location>
        <begin position="64"/>
        <end position="85"/>
    </location>
</feature>
<feature type="compositionally biased region" description="Polar residues" evidence="2">
    <location>
        <begin position="1"/>
        <end position="14"/>
    </location>
</feature>
<feature type="active site" description="Proton acceptor" evidence="1">
    <location>
        <position position="270"/>
    </location>
</feature>
<feature type="binding site" evidence="1">
    <location>
        <begin position="243"/>
        <end position="250"/>
    </location>
    <ligand>
        <name>ATP</name>
        <dbReference type="ChEBI" id="CHEBI:30616"/>
    </ligand>
</feature>
<feature type="binding site" evidence="1">
    <location>
        <position position="308"/>
    </location>
    <ligand>
        <name>substrate</name>
    </ligand>
</feature>
<feature type="binding site" evidence="1">
    <location>
        <position position="398"/>
    </location>
    <ligand>
        <name>ATP</name>
        <dbReference type="ChEBI" id="CHEBI:30616"/>
    </ligand>
</feature>
<feature type="binding site" evidence="1">
    <location>
        <position position="404"/>
    </location>
    <ligand>
        <name>substrate</name>
    </ligand>
</feature>
<evidence type="ECO:0000255" key="1">
    <source>
        <dbReference type="HAMAP-Rule" id="MF_04029"/>
    </source>
</evidence>
<evidence type="ECO:0000256" key="2">
    <source>
        <dbReference type="SAM" id="MobiDB-lite"/>
    </source>
</evidence>
<organismHost>
    <name type="scientific">Connochaetes gnou</name>
    <name type="common">Black wildebeest</name>
    <dbReference type="NCBI Taxonomy" id="59528"/>
</organismHost>
<organismHost>
    <name type="scientific">Connochaetes taurinus</name>
    <name type="common">Blue wildebeest</name>
    <dbReference type="NCBI Taxonomy" id="9927"/>
</organismHost>
<gene>
    <name evidence="1" type="primary">TK</name>
    <name type="synonym">BXLF1</name>
</gene>
<keyword id="KW-0067">ATP-binding</keyword>
<keyword id="KW-0237">DNA synthesis</keyword>
<keyword id="KW-0244">Early protein</keyword>
<keyword id="KW-0418">Kinase</keyword>
<keyword id="KW-0547">Nucleotide-binding</keyword>
<keyword id="KW-0808">Transferase</keyword>
<dbReference type="EC" id="2.7.1.21" evidence="1"/>
<dbReference type="GO" id="GO:0005524">
    <property type="term" value="F:ATP binding"/>
    <property type="evidence" value="ECO:0007669"/>
    <property type="project" value="UniProtKB-KW"/>
</dbReference>
<dbReference type="GO" id="GO:0004797">
    <property type="term" value="F:thymidine kinase activity"/>
    <property type="evidence" value="ECO:0007669"/>
    <property type="project" value="UniProtKB-EC"/>
</dbReference>
<dbReference type="GO" id="GO:0071897">
    <property type="term" value="P:DNA biosynthetic process"/>
    <property type="evidence" value="ECO:0007669"/>
    <property type="project" value="UniProtKB-KW"/>
</dbReference>
<dbReference type="GO" id="GO:0006230">
    <property type="term" value="P:TMP biosynthetic process"/>
    <property type="evidence" value="ECO:0007669"/>
    <property type="project" value="InterPro"/>
</dbReference>
<dbReference type="Gene3D" id="3.90.380.20">
    <property type="entry name" value="Herpesvirus glycoprotein H, domain D-II"/>
    <property type="match status" value="1"/>
</dbReference>
<dbReference type="Gene3D" id="3.40.50.300">
    <property type="entry name" value="P-loop containing nucleotide triphosphate hydrolases"/>
    <property type="match status" value="1"/>
</dbReference>
<dbReference type="HAMAP" id="MF_04029">
    <property type="entry name" value="HSV_KITH"/>
    <property type="match status" value="1"/>
</dbReference>
<dbReference type="InterPro" id="IPR001889">
    <property type="entry name" value="Herpes_TK"/>
</dbReference>
<dbReference type="InterPro" id="IPR013672">
    <property type="entry name" value="Herpes_TK_C"/>
</dbReference>
<dbReference type="InterPro" id="IPR027417">
    <property type="entry name" value="P-loop_NTPase"/>
</dbReference>
<dbReference type="Pfam" id="PF02489">
    <property type="entry name" value="Herpes_glycop_H"/>
    <property type="match status" value="1"/>
</dbReference>
<dbReference type="Pfam" id="PF00693">
    <property type="entry name" value="Herpes_TK"/>
    <property type="match status" value="1"/>
</dbReference>
<dbReference type="Pfam" id="PF08465">
    <property type="entry name" value="Herpes_TK_C"/>
    <property type="match status" value="1"/>
</dbReference>
<dbReference type="SUPFAM" id="SSF52540">
    <property type="entry name" value="P-loop containing nucleoside triphosphate hydrolases"/>
    <property type="match status" value="1"/>
</dbReference>
<comment type="function">
    <text evidence="1">Catalyzes the transfer of the gamma-phospho group of ATP to thymidine to generate dTMP in the salvage pathway of pyrimidine synthesis. The dTMP serves as a substrate for DNA polymerase during viral DNA replication. Allows the virus to be reactivated and to grow in non-proliferative cells lacking a high concentration of phosphorylated nucleic acid precursors.</text>
</comment>
<comment type="catalytic activity">
    <reaction evidence="1">
        <text>thymidine + ATP = dTMP + ADP + H(+)</text>
        <dbReference type="Rhea" id="RHEA:19129"/>
        <dbReference type="ChEBI" id="CHEBI:15378"/>
        <dbReference type="ChEBI" id="CHEBI:17748"/>
        <dbReference type="ChEBI" id="CHEBI:30616"/>
        <dbReference type="ChEBI" id="CHEBI:63528"/>
        <dbReference type="ChEBI" id="CHEBI:456216"/>
        <dbReference type="EC" id="2.7.1.21"/>
    </reaction>
</comment>
<comment type="subunit">
    <text evidence="1">Homodimer.</text>
</comment>
<comment type="similarity">
    <text evidence="1">Belongs to the herpesviridae thymidine kinase family.</text>
</comment>
<sequence>MASNSHNNYNTPRRQNYDVPKAWEEDSLYENIDFLTQPAVSSDTSEDEEPLLSVARRVEVQGVNPGLKPRGLVRPRQDADNPSSDEGFDWELWKLHLSTRAFSFLEPPRLSSSNTASGLRSSCSDFTILGSSGVNPTSHANLSEEEMYEEIPPLASNPSDERHPRQLSGAVAQGAIRKSPRKLKFKPAKFKGLSSSLLNPFTASDSGRRARRQTPTCQPGFTPIFQDLGEPHYVKACTVFFEGCMAAGKTTLLNFARQTLSDDEALTIPEPMRFWTEVYTNVLSQIVKINKECKPGKTSTTAELVSCQLKFATPLKTQSLFLQRSVKKDSEMQPVGPLDKWVIVDRHQLSALVVFPLVLMRRGMLSFSDFFNLLGMFEAHPGEVIALMSVNVEENFTRLKKRGRVCERHIDRDYIKEIKGSFNAAYCAWLFLQYFSIQTTMQICMGLSSLDEACATEGVCHTTASRIWNNRMLVTLSDIISQFSNDYTVQNVCYNFFSQLSTLKFVVIDLSAFRHDVPGAWGEFYMQVMKNGDIKTRVMDFTAIKALADTAHNTHLRSISFSSSQVFSTMLFLILLCVTGAQAITTPAPPRPATTTPRRGVTSAPLIVPASSSELIVTLDGTFHSVTIDMTEIRQYVRQEIIEALWNASHVFESLETTYNRYKDVYRFTDQSIRVNTRGSCQLVKK</sequence>
<reference key="1">
    <citation type="journal article" date="1990" name="Arch. Virol.">
        <title>Nucleotide sequence of a 3.5 kilobase fragment of malignant catarrhal fever virus strain WC11.</title>
        <authorList>
            <person name="Hsu D."/>
            <person name="Shih L.M."/>
            <person name="Zee Y.C."/>
        </authorList>
    </citation>
    <scope>NUCLEOTIDE SEQUENCE</scope>
</reference>